<keyword id="KW-0150">Chloroplast</keyword>
<keyword id="KW-0934">Plastid</keyword>
<keyword id="KW-0687">Ribonucleoprotein</keyword>
<keyword id="KW-0689">Ribosomal protein</keyword>
<keyword id="KW-0694">RNA-binding</keyword>
<keyword id="KW-0699">rRNA-binding</keyword>
<accession>Q1XDH8</accession>
<dbReference type="EMBL" id="DQ995197">
    <property type="protein sequence ID" value="ABJ91312.1"/>
    <property type="molecule type" value="Genomic_DNA"/>
</dbReference>
<dbReference type="EMBL" id="AP006715">
    <property type="protein sequence ID" value="BAE92433.1"/>
    <property type="molecule type" value="Genomic_DNA"/>
</dbReference>
<dbReference type="RefSeq" id="YP_536990.1">
    <property type="nucleotide sequence ID" value="NC_007932.1"/>
</dbReference>
<dbReference type="SMR" id="Q1XDH8"/>
<dbReference type="GeneID" id="3978813"/>
<dbReference type="GO" id="GO:0009507">
    <property type="term" value="C:chloroplast"/>
    <property type="evidence" value="ECO:0007669"/>
    <property type="project" value="UniProtKB-SubCell"/>
</dbReference>
<dbReference type="GO" id="GO:0005763">
    <property type="term" value="C:mitochondrial small ribosomal subunit"/>
    <property type="evidence" value="ECO:0007669"/>
    <property type="project" value="TreeGrafter"/>
</dbReference>
<dbReference type="GO" id="GO:0019843">
    <property type="term" value="F:rRNA binding"/>
    <property type="evidence" value="ECO:0007669"/>
    <property type="project" value="UniProtKB-UniRule"/>
</dbReference>
<dbReference type="GO" id="GO:0003735">
    <property type="term" value="F:structural constituent of ribosome"/>
    <property type="evidence" value="ECO:0007669"/>
    <property type="project" value="InterPro"/>
</dbReference>
<dbReference type="GO" id="GO:0000028">
    <property type="term" value="P:ribosomal small subunit assembly"/>
    <property type="evidence" value="ECO:0007669"/>
    <property type="project" value="TreeGrafter"/>
</dbReference>
<dbReference type="GO" id="GO:0006412">
    <property type="term" value="P:translation"/>
    <property type="evidence" value="ECO:0007669"/>
    <property type="project" value="UniProtKB-UniRule"/>
</dbReference>
<dbReference type="FunFam" id="3.30.860.10:FF:000001">
    <property type="entry name" value="30S ribosomal protein S19"/>
    <property type="match status" value="1"/>
</dbReference>
<dbReference type="Gene3D" id="3.30.860.10">
    <property type="entry name" value="30s Ribosomal Protein S19, Chain A"/>
    <property type="match status" value="1"/>
</dbReference>
<dbReference type="HAMAP" id="MF_00531">
    <property type="entry name" value="Ribosomal_uS19"/>
    <property type="match status" value="1"/>
</dbReference>
<dbReference type="InterPro" id="IPR002222">
    <property type="entry name" value="Ribosomal_uS19"/>
</dbReference>
<dbReference type="InterPro" id="IPR005732">
    <property type="entry name" value="Ribosomal_uS19_bac-type"/>
</dbReference>
<dbReference type="InterPro" id="IPR020934">
    <property type="entry name" value="Ribosomal_uS19_CS"/>
</dbReference>
<dbReference type="InterPro" id="IPR023575">
    <property type="entry name" value="Ribosomal_uS19_SF"/>
</dbReference>
<dbReference type="NCBIfam" id="TIGR01050">
    <property type="entry name" value="rpsS_bact"/>
    <property type="match status" value="1"/>
</dbReference>
<dbReference type="PANTHER" id="PTHR11880">
    <property type="entry name" value="RIBOSOMAL PROTEIN S19P FAMILY MEMBER"/>
    <property type="match status" value="1"/>
</dbReference>
<dbReference type="PANTHER" id="PTHR11880:SF8">
    <property type="entry name" value="SMALL RIBOSOMAL SUBUNIT PROTEIN US19M"/>
    <property type="match status" value="1"/>
</dbReference>
<dbReference type="Pfam" id="PF00203">
    <property type="entry name" value="Ribosomal_S19"/>
    <property type="match status" value="1"/>
</dbReference>
<dbReference type="PIRSF" id="PIRSF002144">
    <property type="entry name" value="Ribosomal_S19"/>
    <property type="match status" value="1"/>
</dbReference>
<dbReference type="PRINTS" id="PR00975">
    <property type="entry name" value="RIBOSOMALS19"/>
</dbReference>
<dbReference type="SUPFAM" id="SSF54570">
    <property type="entry name" value="Ribosomal protein S19"/>
    <property type="match status" value="1"/>
</dbReference>
<dbReference type="PROSITE" id="PS00323">
    <property type="entry name" value="RIBOSOMAL_S19"/>
    <property type="match status" value="1"/>
</dbReference>
<feature type="chain" id="PRO_0000276932" description="Small ribosomal subunit protein uS19c">
    <location>
        <begin position="1"/>
        <end position="92"/>
    </location>
</feature>
<protein>
    <recommendedName>
        <fullName evidence="1">Small ribosomal subunit protein uS19c</fullName>
    </recommendedName>
    <alternativeName>
        <fullName evidence="2">30S ribosomal protein S19, chloroplastic</fullName>
    </alternativeName>
</protein>
<evidence type="ECO:0000255" key="1">
    <source>
        <dbReference type="HAMAP-Rule" id="MF_00531"/>
    </source>
</evidence>
<evidence type="ECO:0000305" key="2"/>
<proteinExistence type="inferred from homology"/>
<gene>
    <name evidence="1" type="primary">rps19</name>
</gene>
<geneLocation type="chloroplast"/>
<sequence>MSRSIHKGPFIDVSLLKRIEALNISGKKEVLKTWSRASTIIPDMVGHTIAVYNGKQHFPVFVSDQMVGHKLGEFVPTRTFRTHVKGDRKARR</sequence>
<reference key="1">
    <citation type="submission" date="2006-09" db="EMBL/GenBank/DDBJ databases">
        <title>Cloning and analysis of the Porphyra yezoensis gene for rps19.</title>
        <authorList>
            <person name="Wang M.Q."/>
            <person name="Mao Y.X."/>
        </authorList>
    </citation>
    <scope>NUCLEOTIDE SEQUENCE [GENOMIC DNA]</scope>
    <source>
        <strain>Qingdao</strain>
    </source>
</reference>
<reference key="2">
    <citation type="submission" date="2003-11" db="EMBL/GenBank/DDBJ databases">
        <title>Whole genome sequence of Porphyra yezoensis chloroplast.</title>
        <authorList>
            <person name="Kunimoto M."/>
            <person name="Morishima K."/>
            <person name="Yoshikawa M."/>
            <person name="Fukuda S."/>
            <person name="Kobayashi T."/>
            <person name="Kobayashi M."/>
            <person name="Okazaki T."/>
            <person name="Ohara I."/>
            <person name="Nakayama I."/>
        </authorList>
    </citation>
    <scope>NUCLEOTIDE SEQUENCE [LARGE SCALE GENOMIC DNA]</scope>
    <source>
        <strain>U-51</strain>
    </source>
</reference>
<name>RR19_PYRYE</name>
<comment type="function">
    <text evidence="1">Protein S19 forms a complex with S13 that binds strongly to the 16S ribosomal RNA.</text>
</comment>
<comment type="subcellular location">
    <subcellularLocation>
        <location>Plastid</location>
        <location>Chloroplast</location>
    </subcellularLocation>
</comment>
<comment type="similarity">
    <text evidence="1">Belongs to the universal ribosomal protein uS19 family.</text>
</comment>
<organism>
    <name type="scientific">Pyropia yezoensis</name>
    <name type="common">Susabi-nori</name>
    <name type="synonym">Porphyra yezoensis</name>
    <dbReference type="NCBI Taxonomy" id="2788"/>
    <lineage>
        <taxon>Eukaryota</taxon>
        <taxon>Rhodophyta</taxon>
        <taxon>Bangiophyceae</taxon>
        <taxon>Bangiales</taxon>
        <taxon>Bangiaceae</taxon>
        <taxon>Pyropia</taxon>
    </lineage>
</organism>